<gene>
    <name type="ordered locus">HAPS_1234</name>
</gene>
<dbReference type="EC" id="2.1.1.223" evidence="1"/>
<dbReference type="EMBL" id="CP001321">
    <property type="protein sequence ID" value="ACL32830.1"/>
    <property type="molecule type" value="Genomic_DNA"/>
</dbReference>
<dbReference type="RefSeq" id="WP_010786146.1">
    <property type="nucleotide sequence ID" value="NC_011852.1"/>
</dbReference>
<dbReference type="SMR" id="B8F678"/>
<dbReference type="STRING" id="557723.HAPS_1234"/>
<dbReference type="KEGG" id="hap:HAPS_1234"/>
<dbReference type="PATRIC" id="fig|557723.8.peg.1220"/>
<dbReference type="HOGENOM" id="CLU_061983_0_0_6"/>
<dbReference type="Proteomes" id="UP000006743">
    <property type="component" value="Chromosome"/>
</dbReference>
<dbReference type="GO" id="GO:0005737">
    <property type="term" value="C:cytoplasm"/>
    <property type="evidence" value="ECO:0007669"/>
    <property type="project" value="UniProtKB-SubCell"/>
</dbReference>
<dbReference type="GO" id="GO:0003676">
    <property type="term" value="F:nucleic acid binding"/>
    <property type="evidence" value="ECO:0007669"/>
    <property type="project" value="InterPro"/>
</dbReference>
<dbReference type="GO" id="GO:0016430">
    <property type="term" value="F:tRNA (adenine-N6)-methyltransferase activity"/>
    <property type="evidence" value="ECO:0007669"/>
    <property type="project" value="UniProtKB-UniRule"/>
</dbReference>
<dbReference type="GO" id="GO:0032259">
    <property type="term" value="P:methylation"/>
    <property type="evidence" value="ECO:0007669"/>
    <property type="project" value="UniProtKB-KW"/>
</dbReference>
<dbReference type="GO" id="GO:0008033">
    <property type="term" value="P:tRNA processing"/>
    <property type="evidence" value="ECO:0007669"/>
    <property type="project" value="UniProtKB-UniRule"/>
</dbReference>
<dbReference type="CDD" id="cd02440">
    <property type="entry name" value="AdoMet_MTases"/>
    <property type="match status" value="1"/>
</dbReference>
<dbReference type="Gene3D" id="3.40.50.150">
    <property type="entry name" value="Vaccinia Virus protein VP39"/>
    <property type="match status" value="1"/>
</dbReference>
<dbReference type="HAMAP" id="MF_01872">
    <property type="entry name" value="tRNA_methyltr_YfiC"/>
    <property type="match status" value="1"/>
</dbReference>
<dbReference type="InterPro" id="IPR002052">
    <property type="entry name" value="DNA_methylase_N6_adenine_CS"/>
</dbReference>
<dbReference type="InterPro" id="IPR029063">
    <property type="entry name" value="SAM-dependent_MTases_sf"/>
</dbReference>
<dbReference type="InterPro" id="IPR007848">
    <property type="entry name" value="Small_mtfrase_dom"/>
</dbReference>
<dbReference type="InterPro" id="IPR050210">
    <property type="entry name" value="tRNA_Adenine-N(6)_MTase"/>
</dbReference>
<dbReference type="InterPro" id="IPR022882">
    <property type="entry name" value="tRNA_adenine-N6_MeTrfase"/>
</dbReference>
<dbReference type="PANTHER" id="PTHR47739">
    <property type="entry name" value="TRNA1(VAL) (ADENINE(37)-N6)-METHYLTRANSFERASE"/>
    <property type="match status" value="1"/>
</dbReference>
<dbReference type="PANTHER" id="PTHR47739:SF1">
    <property type="entry name" value="TRNA1(VAL) (ADENINE(37)-N6)-METHYLTRANSFERASE"/>
    <property type="match status" value="1"/>
</dbReference>
<dbReference type="Pfam" id="PF05175">
    <property type="entry name" value="MTS"/>
    <property type="match status" value="1"/>
</dbReference>
<dbReference type="PRINTS" id="PR00507">
    <property type="entry name" value="N12N6MTFRASE"/>
</dbReference>
<dbReference type="SUPFAM" id="SSF53335">
    <property type="entry name" value="S-adenosyl-L-methionine-dependent methyltransferases"/>
    <property type="match status" value="1"/>
</dbReference>
<dbReference type="PROSITE" id="PS00092">
    <property type="entry name" value="N6_MTASE"/>
    <property type="match status" value="1"/>
</dbReference>
<sequence>MSGFQFKQFFIAHDCCAMKVNTDGILLGSIADPSNARHILDLGTGTGLIAIMLAQRTASAQITALELEENAFHQAQENAQRCPWNNRIDVLQADIMTWKSTKKFDLIVSNPPYFEHSLASRNKQRDLARAVTYSHFDWLKQSQQWLTPNGRISFILPCDAGKKLLEQSHLLGLYCIEYWEICTKVGLSPKRVILTFSPQYAEMALHTLTIYDENQRYTADFTQFTEIFYLKVNSK</sequence>
<organism>
    <name type="scientific">Glaesserella parasuis serovar 5 (strain SH0165)</name>
    <name type="common">Haemophilus parasuis</name>
    <dbReference type="NCBI Taxonomy" id="557723"/>
    <lineage>
        <taxon>Bacteria</taxon>
        <taxon>Pseudomonadati</taxon>
        <taxon>Pseudomonadota</taxon>
        <taxon>Gammaproteobacteria</taxon>
        <taxon>Pasteurellales</taxon>
        <taxon>Pasteurellaceae</taxon>
        <taxon>Glaesserella</taxon>
    </lineage>
</organism>
<reference key="1">
    <citation type="journal article" date="2009" name="J. Bacteriol.">
        <title>Complete genome sequence of Haemophilus parasuis SH0165.</title>
        <authorList>
            <person name="Yue M."/>
            <person name="Yang F."/>
            <person name="Yang J."/>
            <person name="Bei W."/>
            <person name="Cai X."/>
            <person name="Chen L."/>
            <person name="Dong J."/>
            <person name="Zhou R."/>
            <person name="Jin M."/>
            <person name="Jin Q."/>
            <person name="Chen H."/>
        </authorList>
    </citation>
    <scope>NUCLEOTIDE SEQUENCE [LARGE SCALE GENOMIC DNA]</scope>
    <source>
        <strain>SH0165</strain>
    </source>
</reference>
<evidence type="ECO:0000255" key="1">
    <source>
        <dbReference type="HAMAP-Rule" id="MF_01872"/>
    </source>
</evidence>
<proteinExistence type="inferred from homology"/>
<comment type="function">
    <text evidence="1">Specifically methylates the adenine in position 37 of tRNA(1)(Val) (anticodon cmo5UAC).</text>
</comment>
<comment type="catalytic activity">
    <reaction evidence="1">
        <text>adenosine(37) in tRNA1(Val) + S-adenosyl-L-methionine = N(6)-methyladenosine(37) in tRNA1(Val) + S-adenosyl-L-homocysteine + H(+)</text>
        <dbReference type="Rhea" id="RHEA:43160"/>
        <dbReference type="Rhea" id="RHEA-COMP:10369"/>
        <dbReference type="Rhea" id="RHEA-COMP:10370"/>
        <dbReference type="ChEBI" id="CHEBI:15378"/>
        <dbReference type="ChEBI" id="CHEBI:57856"/>
        <dbReference type="ChEBI" id="CHEBI:59789"/>
        <dbReference type="ChEBI" id="CHEBI:74411"/>
        <dbReference type="ChEBI" id="CHEBI:74449"/>
        <dbReference type="EC" id="2.1.1.223"/>
    </reaction>
</comment>
<comment type="subcellular location">
    <subcellularLocation>
        <location evidence="1">Cytoplasm</location>
    </subcellularLocation>
</comment>
<comment type="similarity">
    <text evidence="1">Belongs to the methyltransferase superfamily. tRNA (adenine-N(6)-)-methyltransferase family.</text>
</comment>
<keyword id="KW-0963">Cytoplasm</keyword>
<keyword id="KW-0489">Methyltransferase</keyword>
<keyword id="KW-1185">Reference proteome</keyword>
<keyword id="KW-0949">S-adenosyl-L-methionine</keyword>
<keyword id="KW-0808">Transferase</keyword>
<keyword id="KW-0819">tRNA processing</keyword>
<protein>
    <recommendedName>
        <fullName evidence="1">tRNA1(Val) (adenine(37)-N6)-methyltransferase</fullName>
        <ecNumber evidence="1">2.1.1.223</ecNumber>
    </recommendedName>
    <alternativeName>
        <fullName evidence="1">tRNA m6A37 methyltransferase</fullName>
    </alternativeName>
</protein>
<name>TRMN6_GLAP5</name>
<feature type="chain" id="PRO_0000387386" description="tRNA1(Val) (adenine(37)-N6)-methyltransferase">
    <location>
        <begin position="1"/>
        <end position="235"/>
    </location>
</feature>
<accession>B8F678</accession>